<comment type="function">
    <text evidence="1">The alpha subunit is responsible for the aldol cleavage of indoleglycerol phosphate to indole and glyceraldehyde 3-phosphate.</text>
</comment>
<comment type="catalytic activity">
    <reaction evidence="1">
        <text>(1S,2R)-1-C-(indol-3-yl)glycerol 3-phosphate + L-serine = D-glyceraldehyde 3-phosphate + L-tryptophan + H2O</text>
        <dbReference type="Rhea" id="RHEA:10532"/>
        <dbReference type="ChEBI" id="CHEBI:15377"/>
        <dbReference type="ChEBI" id="CHEBI:33384"/>
        <dbReference type="ChEBI" id="CHEBI:57912"/>
        <dbReference type="ChEBI" id="CHEBI:58866"/>
        <dbReference type="ChEBI" id="CHEBI:59776"/>
        <dbReference type="EC" id="4.2.1.20"/>
    </reaction>
</comment>
<comment type="pathway">
    <text evidence="1">Amino-acid biosynthesis; L-tryptophan biosynthesis; L-tryptophan from chorismate: step 5/5.</text>
</comment>
<comment type="subunit">
    <text evidence="1">Tetramer of two alpha and two beta chains.</text>
</comment>
<comment type="similarity">
    <text evidence="1">Belongs to the TrpA family.</text>
</comment>
<sequence>MSRIQQTFAALAQQGRKGLIPFITAGDPDPAKTVEFMHALAAGGADVIELGVPFSDPMADGPVIQRSSERALARGVTLKHVLADVKRFRETNQTTPVVLMGYANPIERHGVDAFAADARAAGVDGVLVVDYPPEEAAVFAEKMRAAGIDPIFLLAPTSTDARIAEVGKIASGYVYYVSLKGVTGAGNLDVSSIAGKIPAIKSRVPVPVGVGFGIRDAETARAVAEVSDAVVIGSRLVQLLESAAPEGAVAALQAFIAELRAALDGAANTAR</sequence>
<feature type="chain" id="PRO_1000095699" description="Tryptophan synthase alpha chain">
    <location>
        <begin position="1"/>
        <end position="271"/>
    </location>
</feature>
<feature type="active site" description="Proton acceptor" evidence="1">
    <location>
        <position position="49"/>
    </location>
</feature>
<feature type="active site" description="Proton acceptor" evidence="1">
    <location>
        <position position="60"/>
    </location>
</feature>
<accession>A9AMA5</accession>
<gene>
    <name evidence="1" type="primary">trpA</name>
    <name type="ordered locus">Bmul_4620</name>
    <name type="ordered locus">BMULJ_03891</name>
</gene>
<evidence type="ECO:0000255" key="1">
    <source>
        <dbReference type="HAMAP-Rule" id="MF_00131"/>
    </source>
</evidence>
<name>TRPA_BURM1</name>
<keyword id="KW-0028">Amino-acid biosynthesis</keyword>
<keyword id="KW-0057">Aromatic amino acid biosynthesis</keyword>
<keyword id="KW-0456">Lyase</keyword>
<keyword id="KW-1185">Reference proteome</keyword>
<keyword id="KW-0822">Tryptophan biosynthesis</keyword>
<reference key="1">
    <citation type="submission" date="2007-10" db="EMBL/GenBank/DDBJ databases">
        <title>Complete sequence of chromosome 2 of Burkholderia multivorans ATCC 17616.</title>
        <authorList>
            <person name="Copeland A."/>
            <person name="Lucas S."/>
            <person name="Lapidus A."/>
            <person name="Barry K."/>
            <person name="Glavina del Rio T."/>
            <person name="Dalin E."/>
            <person name="Tice H."/>
            <person name="Pitluck S."/>
            <person name="Chain P."/>
            <person name="Malfatti S."/>
            <person name="Shin M."/>
            <person name="Vergez L."/>
            <person name="Schmutz J."/>
            <person name="Larimer F."/>
            <person name="Land M."/>
            <person name="Hauser L."/>
            <person name="Kyrpides N."/>
            <person name="Kim E."/>
            <person name="Tiedje J."/>
            <person name="Richardson P."/>
        </authorList>
    </citation>
    <scope>NUCLEOTIDE SEQUENCE [LARGE SCALE GENOMIC DNA]</scope>
    <source>
        <strain>ATCC 17616 / 249</strain>
    </source>
</reference>
<reference key="2">
    <citation type="submission" date="2007-04" db="EMBL/GenBank/DDBJ databases">
        <title>Complete genome sequence of Burkholderia multivorans ATCC 17616.</title>
        <authorList>
            <person name="Ohtsubo Y."/>
            <person name="Yamashita A."/>
            <person name="Kurokawa K."/>
            <person name="Takami H."/>
            <person name="Yuhara S."/>
            <person name="Nishiyama E."/>
            <person name="Endo R."/>
            <person name="Miyazaki R."/>
            <person name="Ono A."/>
            <person name="Yano K."/>
            <person name="Ito M."/>
            <person name="Sota M."/>
            <person name="Yuji N."/>
            <person name="Hattori M."/>
            <person name="Tsuda M."/>
        </authorList>
    </citation>
    <scope>NUCLEOTIDE SEQUENCE [LARGE SCALE GENOMIC DNA]</scope>
    <source>
        <strain>ATCC 17616 / 249</strain>
    </source>
</reference>
<proteinExistence type="inferred from homology"/>
<protein>
    <recommendedName>
        <fullName evidence="1">Tryptophan synthase alpha chain</fullName>
        <ecNumber evidence="1">4.2.1.20</ecNumber>
    </recommendedName>
</protein>
<dbReference type="EC" id="4.2.1.20" evidence="1"/>
<dbReference type="EMBL" id="CP000869">
    <property type="protein sequence ID" value="ABX18298.1"/>
    <property type="molecule type" value="Genomic_DNA"/>
</dbReference>
<dbReference type="EMBL" id="AP009386">
    <property type="protein sequence ID" value="BAG45751.1"/>
    <property type="molecule type" value="Genomic_DNA"/>
</dbReference>
<dbReference type="RefSeq" id="WP_012217295.1">
    <property type="nucleotide sequence ID" value="NC_010086.1"/>
</dbReference>
<dbReference type="SMR" id="A9AMA5"/>
<dbReference type="STRING" id="395019.BMULJ_03891"/>
<dbReference type="GeneID" id="89567187"/>
<dbReference type="KEGG" id="bmj:BMULJ_03891"/>
<dbReference type="KEGG" id="bmu:Bmul_4620"/>
<dbReference type="eggNOG" id="COG0159">
    <property type="taxonomic scope" value="Bacteria"/>
</dbReference>
<dbReference type="HOGENOM" id="CLU_016734_0_0_4"/>
<dbReference type="UniPathway" id="UPA00035">
    <property type="reaction ID" value="UER00044"/>
</dbReference>
<dbReference type="Proteomes" id="UP000008815">
    <property type="component" value="Chromosome 2"/>
</dbReference>
<dbReference type="GO" id="GO:0005829">
    <property type="term" value="C:cytosol"/>
    <property type="evidence" value="ECO:0007669"/>
    <property type="project" value="TreeGrafter"/>
</dbReference>
<dbReference type="GO" id="GO:0004834">
    <property type="term" value="F:tryptophan synthase activity"/>
    <property type="evidence" value="ECO:0007669"/>
    <property type="project" value="UniProtKB-UniRule"/>
</dbReference>
<dbReference type="CDD" id="cd04724">
    <property type="entry name" value="Tryptophan_synthase_alpha"/>
    <property type="match status" value="1"/>
</dbReference>
<dbReference type="FunFam" id="3.20.20.70:FF:000037">
    <property type="entry name" value="Tryptophan synthase alpha chain"/>
    <property type="match status" value="1"/>
</dbReference>
<dbReference type="Gene3D" id="3.20.20.70">
    <property type="entry name" value="Aldolase class I"/>
    <property type="match status" value="1"/>
</dbReference>
<dbReference type="HAMAP" id="MF_00131">
    <property type="entry name" value="Trp_synth_alpha"/>
    <property type="match status" value="1"/>
</dbReference>
<dbReference type="InterPro" id="IPR013785">
    <property type="entry name" value="Aldolase_TIM"/>
</dbReference>
<dbReference type="InterPro" id="IPR011060">
    <property type="entry name" value="RibuloseP-bd_barrel"/>
</dbReference>
<dbReference type="InterPro" id="IPR018204">
    <property type="entry name" value="Trp_synthase_alpha_AS"/>
</dbReference>
<dbReference type="InterPro" id="IPR002028">
    <property type="entry name" value="Trp_synthase_suA"/>
</dbReference>
<dbReference type="NCBIfam" id="TIGR00262">
    <property type="entry name" value="trpA"/>
    <property type="match status" value="1"/>
</dbReference>
<dbReference type="PANTHER" id="PTHR43406:SF1">
    <property type="entry name" value="TRYPTOPHAN SYNTHASE ALPHA CHAIN, CHLOROPLASTIC"/>
    <property type="match status" value="1"/>
</dbReference>
<dbReference type="PANTHER" id="PTHR43406">
    <property type="entry name" value="TRYPTOPHAN SYNTHASE, ALPHA CHAIN"/>
    <property type="match status" value="1"/>
</dbReference>
<dbReference type="Pfam" id="PF00290">
    <property type="entry name" value="Trp_syntA"/>
    <property type="match status" value="1"/>
</dbReference>
<dbReference type="SUPFAM" id="SSF51366">
    <property type="entry name" value="Ribulose-phoshate binding barrel"/>
    <property type="match status" value="1"/>
</dbReference>
<dbReference type="PROSITE" id="PS00167">
    <property type="entry name" value="TRP_SYNTHASE_ALPHA"/>
    <property type="match status" value="1"/>
</dbReference>
<organism>
    <name type="scientific">Burkholderia multivorans (strain ATCC 17616 / 249)</name>
    <dbReference type="NCBI Taxonomy" id="395019"/>
    <lineage>
        <taxon>Bacteria</taxon>
        <taxon>Pseudomonadati</taxon>
        <taxon>Pseudomonadota</taxon>
        <taxon>Betaproteobacteria</taxon>
        <taxon>Burkholderiales</taxon>
        <taxon>Burkholderiaceae</taxon>
        <taxon>Burkholderia</taxon>
        <taxon>Burkholderia cepacia complex</taxon>
    </lineage>
</organism>